<protein>
    <recommendedName>
        <fullName>Putative tenascin-XA</fullName>
        <shortName>TN-XA</shortName>
    </recommendedName>
</protein>
<feature type="chain" id="PRO_0000348270" description="Putative tenascin-XA">
    <location>
        <begin position="1"/>
        <end position="311"/>
    </location>
</feature>
<feature type="domain" description="Fibronectin type-III 1" evidence="1">
    <location>
        <begin position="41"/>
        <end position="135"/>
    </location>
</feature>
<feature type="domain" description="Fibronectin type-III 2" evidence="1">
    <location>
        <begin position="145"/>
        <end position="249"/>
    </location>
</feature>
<feature type="domain" description="Fibronectin type-III 3" evidence="1">
    <location>
        <begin position="250"/>
        <end position="311"/>
    </location>
</feature>
<feature type="region of interest" description="Disordered" evidence="2">
    <location>
        <begin position="1"/>
        <end position="47"/>
    </location>
</feature>
<feature type="region of interest" description="Disordered" evidence="2">
    <location>
        <begin position="124"/>
        <end position="150"/>
    </location>
</feature>
<dbReference type="EMBL" id="S38953">
    <property type="protein sequence ID" value="AAB22399.2"/>
    <property type="molecule type" value="Genomic_DNA"/>
</dbReference>
<dbReference type="PIR" id="A38921">
    <property type="entry name" value="A38921"/>
</dbReference>
<dbReference type="SMR" id="Q16473"/>
<dbReference type="FunCoup" id="Q16473">
    <property type="interactions" value="2"/>
</dbReference>
<dbReference type="IntAct" id="Q16473">
    <property type="interactions" value="2"/>
</dbReference>
<dbReference type="BioMuta" id="HGNC:11975"/>
<dbReference type="DMDM" id="74706767"/>
<dbReference type="jPOST" id="Q16473"/>
<dbReference type="MassIVE" id="Q16473"/>
<dbReference type="ProteomicsDB" id="60873"/>
<dbReference type="AGR" id="HGNC:11975"/>
<dbReference type="GeneCards" id="TNXA"/>
<dbReference type="HGNC" id="HGNC:11975">
    <property type="gene designation" value="TNXA"/>
</dbReference>
<dbReference type="neXtProt" id="NX_Q16473"/>
<dbReference type="InParanoid" id="Q16473"/>
<dbReference type="PAN-GO" id="Q16473">
    <property type="GO annotations" value="5 GO annotations based on evolutionary models"/>
</dbReference>
<dbReference type="PhylomeDB" id="Q16473"/>
<dbReference type="PathwayCommons" id="Q16473"/>
<dbReference type="SignaLink" id="Q16473"/>
<dbReference type="Pharos" id="Q16473">
    <property type="development level" value="Tdark"/>
</dbReference>
<dbReference type="Proteomes" id="UP000005640">
    <property type="component" value="Unplaced"/>
</dbReference>
<dbReference type="RNAct" id="Q16473">
    <property type="molecule type" value="protein"/>
</dbReference>
<dbReference type="GO" id="GO:0070062">
    <property type="term" value="C:extracellular exosome"/>
    <property type="evidence" value="ECO:0007005"/>
    <property type="project" value="UniProtKB"/>
</dbReference>
<dbReference type="CDD" id="cd00063">
    <property type="entry name" value="FN3"/>
    <property type="match status" value="3"/>
</dbReference>
<dbReference type="FunFam" id="2.60.40.10:FF:000024">
    <property type="entry name" value="Tenascin-X"/>
    <property type="match status" value="1"/>
</dbReference>
<dbReference type="FunFam" id="2.60.40.10:FF:000760">
    <property type="entry name" value="tenascin-X"/>
    <property type="match status" value="1"/>
</dbReference>
<dbReference type="Gene3D" id="2.60.40.10">
    <property type="entry name" value="Immunoglobulins"/>
    <property type="match status" value="3"/>
</dbReference>
<dbReference type="InterPro" id="IPR050991">
    <property type="entry name" value="ECM_Regulatory_Proteins"/>
</dbReference>
<dbReference type="InterPro" id="IPR003961">
    <property type="entry name" value="FN3_dom"/>
</dbReference>
<dbReference type="InterPro" id="IPR036116">
    <property type="entry name" value="FN3_sf"/>
</dbReference>
<dbReference type="InterPro" id="IPR013783">
    <property type="entry name" value="Ig-like_fold"/>
</dbReference>
<dbReference type="PANTHER" id="PTHR46708">
    <property type="entry name" value="TENASCIN"/>
    <property type="match status" value="1"/>
</dbReference>
<dbReference type="PANTHER" id="PTHR46708:SF3">
    <property type="entry name" value="TENASCIN-X"/>
    <property type="match status" value="1"/>
</dbReference>
<dbReference type="Pfam" id="PF00041">
    <property type="entry name" value="fn3"/>
    <property type="match status" value="3"/>
</dbReference>
<dbReference type="SMART" id="SM00060">
    <property type="entry name" value="FN3"/>
    <property type="match status" value="3"/>
</dbReference>
<dbReference type="SUPFAM" id="SSF49265">
    <property type="entry name" value="Fibronectin type III"/>
    <property type="match status" value="3"/>
</dbReference>
<dbReference type="PROSITE" id="PS50853">
    <property type="entry name" value="FN3"/>
    <property type="match status" value="2"/>
</dbReference>
<comment type="tissue specificity">
    <text evidence="3">Expressed in the adrenal gland.</text>
</comment>
<comment type="miscellaneous">
    <text>TNX genes are located in the class III HLA region within a complex locus, named RCCX module, containing genes for WHR1/STK19, C4B, CYP21B/CYP21A2 and TNXB. Most chromosomes bear 2 modules, but monomodular and trimodular haplotypes are common in most populations. The bimodular haplotype results from the duplication of the RCCX module, leading to a duplicate containing RP2/RP1 pseudogene, C4A, CYP21A/CYP21A1P and TNXA. TNXA is a duplicated section of TNXB and probably consists in a truncated pseudogene: it contains a 120 bp deletion causing a frameshift and a premature stop codon that probably render the gene non-functional. In some pathologies, an unequal crossover between monomodular and bimodular RCCX results in a chromosome with a TNXB-TNXA hybrid gene, arising from a fusion between the TNXB gene of a monomodular RCCX and the TNXA gene of a bimodular RCCX. The TNXB-TNXA hybrid may correspond to TNXB-Short gene and may produce a functional protein.</text>
</comment>
<comment type="caution">
    <text evidence="4">Could be the product of a pseudogene. TNXA is transcriptionally active in adrenal cortex but no protein product has been observed.</text>
</comment>
<evidence type="ECO:0000255" key="1">
    <source>
        <dbReference type="PROSITE-ProRule" id="PRU00316"/>
    </source>
</evidence>
<evidence type="ECO:0000256" key="2">
    <source>
        <dbReference type="SAM" id="MobiDB-lite"/>
    </source>
</evidence>
<evidence type="ECO:0000269" key="3">
    <source>
    </source>
</evidence>
<evidence type="ECO:0000305" key="4"/>
<gene>
    <name type="primary">TNXA</name>
    <name type="synonym">XA</name>
</gene>
<proteinExistence type="uncertain"/>
<reference key="1">
    <citation type="journal article" date="1992" name="Mol. Cell. Biol.">
        <title>Mechanism and consequences of the duplication of the human C4/P450c21/gene X locus.</title>
        <authorList>
            <person name="Gitelman S.E."/>
            <person name="Bristow J."/>
            <person name="Miller W.L."/>
        </authorList>
    </citation>
    <scope>NUCLEOTIDE SEQUENCE [MRNA]</scope>
    <scope>TISSUE SPECIFICITY</scope>
</reference>
<reference key="2">
    <citation type="journal article" date="1992" name="Mol. Cell. Biol.">
        <authorList>
            <person name="Gitelman S.E."/>
            <person name="Bristow J."/>
            <person name="Miller W.L."/>
        </authorList>
    </citation>
    <scope>ERRATUM OF PUBMED:1373808</scope>
</reference>
<reference key="3">
    <citation type="journal article" date="2002" name="Hum. Immunol.">
        <title>An unequal crossover event in RCCX modules of the human MHC resulting in the formation of a TNXB/TNXA hybrid and deletion of the CYP21A.</title>
        <authorList>
            <person name="Jaatinen T."/>
            <person name="Chung E.K."/>
            <person name="Ruuskanen O."/>
            <person name="Lokki M.-L."/>
        </authorList>
    </citation>
    <scope>GENE STRUCTURE</scope>
</reference>
<reference key="4">
    <citation type="journal article" date="2002" name="Hum. Mol. Genet.">
        <title>Carriership of a defective tenascin-X gene in steroid 21-hydroxylase deficiency patients: TNXB -TNXA hybrids in apparent large-scale gene conversions.</title>
        <authorList>
            <person name="Koppens P.F.J."/>
            <person name="Hoogenboezem T."/>
            <person name="Degenhart H.J."/>
        </authorList>
    </citation>
    <scope>GENE STRUCTURE</scope>
</reference>
<keyword id="KW-1267">Proteomics identification</keyword>
<keyword id="KW-1185">Reference proteome</keyword>
<keyword id="KW-0677">Repeat</keyword>
<sequence>MEDKNGAPHGAPHSDSPLGFSHAAPEEDTPAPELAPEAPEPPEEPRLGVLTVTDTTPDSMRLSWSVAQGPFDSFVVQYEDTNGQPQALLVDGDQSKILISGLEPSTPYRFLLYGLHEGKRLGPLSAEGTTGLAPAGQTSEESRPRLSQLSVTDVTTSSLRLNWEAPPGAFDSFLLRFGVPSPSTLEPHPRPLLQRELMVPGTRHSAVLRDLRSGTLYSLTLYGLRGPHKADSIQGTARTLSPVLESPRDLQFSEIRETSAKVNWMPPPSRADSFKVSYQLADGGEPQSVQVDGRARTQKLQFLTVPHSCVH</sequence>
<name>TENXA_HUMAN</name>
<organism>
    <name type="scientific">Homo sapiens</name>
    <name type="common">Human</name>
    <dbReference type="NCBI Taxonomy" id="9606"/>
    <lineage>
        <taxon>Eukaryota</taxon>
        <taxon>Metazoa</taxon>
        <taxon>Chordata</taxon>
        <taxon>Craniata</taxon>
        <taxon>Vertebrata</taxon>
        <taxon>Euteleostomi</taxon>
        <taxon>Mammalia</taxon>
        <taxon>Eutheria</taxon>
        <taxon>Euarchontoglires</taxon>
        <taxon>Primates</taxon>
        <taxon>Haplorrhini</taxon>
        <taxon>Catarrhini</taxon>
        <taxon>Hominidae</taxon>
        <taxon>Homo</taxon>
    </lineage>
</organism>
<accession>Q16473</accession>